<evidence type="ECO:0000255" key="1">
    <source>
        <dbReference type="HAMAP-Rule" id="MF_00042"/>
    </source>
</evidence>
<evidence type="ECO:0000255" key="2">
    <source>
        <dbReference type="PROSITE-ProRule" id="PRU00408"/>
    </source>
</evidence>
<reference key="1">
    <citation type="submission" date="2002-12" db="EMBL/GenBank/DDBJ databases">
        <title>Complete genome sequence of Vibrio vulnificus CMCP6.</title>
        <authorList>
            <person name="Rhee J.H."/>
            <person name="Kim S.Y."/>
            <person name="Chung S.S."/>
            <person name="Kim J.J."/>
            <person name="Moon Y.H."/>
            <person name="Jeong H."/>
            <person name="Choy H.E."/>
        </authorList>
    </citation>
    <scope>NUCLEOTIDE SEQUENCE [LARGE SCALE GENOMIC DNA]</scope>
    <source>
        <strain>CMCP6</strain>
    </source>
</reference>
<name>RNH_VIBVU</name>
<keyword id="KW-0963">Cytoplasm</keyword>
<keyword id="KW-0255">Endonuclease</keyword>
<keyword id="KW-0378">Hydrolase</keyword>
<keyword id="KW-0460">Magnesium</keyword>
<keyword id="KW-0479">Metal-binding</keyword>
<keyword id="KW-0540">Nuclease</keyword>
<gene>
    <name evidence="1" type="primary">rnhA</name>
    <name type="ordered locus">VV1_1886</name>
</gene>
<feature type="chain" id="PRO_0000195418" description="Ribonuclease HI">
    <location>
        <begin position="1"/>
        <end position="155"/>
    </location>
</feature>
<feature type="domain" description="RNase H type-1" evidence="2">
    <location>
        <begin position="1"/>
        <end position="142"/>
    </location>
</feature>
<feature type="binding site" evidence="1">
    <location>
        <position position="10"/>
    </location>
    <ligand>
        <name>Mg(2+)</name>
        <dbReference type="ChEBI" id="CHEBI:18420"/>
        <label>1</label>
    </ligand>
</feature>
<feature type="binding site" evidence="1">
    <location>
        <position position="10"/>
    </location>
    <ligand>
        <name>Mg(2+)</name>
        <dbReference type="ChEBI" id="CHEBI:18420"/>
        <label>2</label>
    </ligand>
</feature>
<feature type="binding site" evidence="1">
    <location>
        <position position="48"/>
    </location>
    <ligand>
        <name>Mg(2+)</name>
        <dbReference type="ChEBI" id="CHEBI:18420"/>
        <label>1</label>
    </ligand>
</feature>
<feature type="binding site" evidence="1">
    <location>
        <position position="70"/>
    </location>
    <ligand>
        <name>Mg(2+)</name>
        <dbReference type="ChEBI" id="CHEBI:18420"/>
        <label>1</label>
    </ligand>
</feature>
<feature type="binding site" evidence="1">
    <location>
        <position position="134"/>
    </location>
    <ligand>
        <name>Mg(2+)</name>
        <dbReference type="ChEBI" id="CHEBI:18420"/>
        <label>2</label>
    </ligand>
</feature>
<protein>
    <recommendedName>
        <fullName evidence="1">Ribonuclease HI</fullName>
        <shortName evidence="1">RNase HI</shortName>
        <ecNumber evidence="1">3.1.26.4</ecNumber>
    </recommendedName>
</protein>
<accession>Q8DBD5</accession>
<organism>
    <name type="scientific">Vibrio vulnificus (strain CMCP6)</name>
    <dbReference type="NCBI Taxonomy" id="216895"/>
    <lineage>
        <taxon>Bacteria</taxon>
        <taxon>Pseudomonadati</taxon>
        <taxon>Pseudomonadota</taxon>
        <taxon>Gammaproteobacteria</taxon>
        <taxon>Vibrionales</taxon>
        <taxon>Vibrionaceae</taxon>
        <taxon>Vibrio</taxon>
    </lineage>
</organism>
<comment type="function">
    <text evidence="1">Endonuclease that specifically degrades the RNA of RNA-DNA hybrids.</text>
</comment>
<comment type="catalytic activity">
    <reaction evidence="1">
        <text>Endonucleolytic cleavage to 5'-phosphomonoester.</text>
        <dbReference type="EC" id="3.1.26.4"/>
    </reaction>
</comment>
<comment type="cofactor">
    <cofactor evidence="1">
        <name>Mg(2+)</name>
        <dbReference type="ChEBI" id="CHEBI:18420"/>
    </cofactor>
    <text evidence="1">Binds 1 Mg(2+) ion per subunit. May bind a second metal ion at a regulatory site, or after substrate binding.</text>
</comment>
<comment type="subunit">
    <text evidence="1">Monomer.</text>
</comment>
<comment type="subcellular location">
    <subcellularLocation>
        <location evidence="1">Cytoplasm</location>
    </subcellularLocation>
</comment>
<comment type="similarity">
    <text evidence="1">Belongs to the RNase H family.</text>
</comment>
<sequence length="155" mass="17647">MTKQVEIFTDGSCLGNPGPGGYGVVLRYKQVEKTLAQGYRLTTNNRMEMMATIVALQALKEPCNVILTTDSQYVRQGITQWIHNWKKRGWKTADKKPVKNADLWQALDKETTRHTIDWRWVKGHAGHRENEMCDELARAAAENPTLDDTGYQPAE</sequence>
<dbReference type="EC" id="3.1.26.4" evidence="1"/>
<dbReference type="EMBL" id="AE016795">
    <property type="protein sequence ID" value="AAO10288.1"/>
    <property type="molecule type" value="Genomic_DNA"/>
</dbReference>
<dbReference type="RefSeq" id="WP_011079787.1">
    <property type="nucleotide sequence ID" value="NC_004459.3"/>
</dbReference>
<dbReference type="SMR" id="Q8DBD5"/>
<dbReference type="KEGG" id="vvu:VV1_1886"/>
<dbReference type="HOGENOM" id="CLU_030894_6_0_6"/>
<dbReference type="Proteomes" id="UP000002275">
    <property type="component" value="Chromosome 1"/>
</dbReference>
<dbReference type="GO" id="GO:0005737">
    <property type="term" value="C:cytoplasm"/>
    <property type="evidence" value="ECO:0007669"/>
    <property type="project" value="UniProtKB-SubCell"/>
</dbReference>
<dbReference type="GO" id="GO:0000287">
    <property type="term" value="F:magnesium ion binding"/>
    <property type="evidence" value="ECO:0007669"/>
    <property type="project" value="UniProtKB-UniRule"/>
</dbReference>
<dbReference type="GO" id="GO:0003676">
    <property type="term" value="F:nucleic acid binding"/>
    <property type="evidence" value="ECO:0007669"/>
    <property type="project" value="InterPro"/>
</dbReference>
<dbReference type="GO" id="GO:0004523">
    <property type="term" value="F:RNA-DNA hybrid ribonuclease activity"/>
    <property type="evidence" value="ECO:0007669"/>
    <property type="project" value="UniProtKB-UniRule"/>
</dbReference>
<dbReference type="GO" id="GO:0043137">
    <property type="term" value="P:DNA replication, removal of RNA primer"/>
    <property type="evidence" value="ECO:0007669"/>
    <property type="project" value="TreeGrafter"/>
</dbReference>
<dbReference type="CDD" id="cd09278">
    <property type="entry name" value="RNase_HI_prokaryote_like"/>
    <property type="match status" value="1"/>
</dbReference>
<dbReference type="FunFam" id="3.30.420.10:FF:000008">
    <property type="entry name" value="Ribonuclease H"/>
    <property type="match status" value="1"/>
</dbReference>
<dbReference type="Gene3D" id="3.30.420.10">
    <property type="entry name" value="Ribonuclease H-like superfamily/Ribonuclease H"/>
    <property type="match status" value="1"/>
</dbReference>
<dbReference type="HAMAP" id="MF_00042">
    <property type="entry name" value="RNase_H"/>
    <property type="match status" value="1"/>
</dbReference>
<dbReference type="InterPro" id="IPR050092">
    <property type="entry name" value="RNase_H"/>
</dbReference>
<dbReference type="InterPro" id="IPR012337">
    <property type="entry name" value="RNaseH-like_sf"/>
</dbReference>
<dbReference type="InterPro" id="IPR002156">
    <property type="entry name" value="RNaseH_domain"/>
</dbReference>
<dbReference type="InterPro" id="IPR036397">
    <property type="entry name" value="RNaseH_sf"/>
</dbReference>
<dbReference type="InterPro" id="IPR022892">
    <property type="entry name" value="RNaseHI"/>
</dbReference>
<dbReference type="NCBIfam" id="NF001236">
    <property type="entry name" value="PRK00203.1"/>
    <property type="match status" value="1"/>
</dbReference>
<dbReference type="PANTHER" id="PTHR10642">
    <property type="entry name" value="RIBONUCLEASE H1"/>
    <property type="match status" value="1"/>
</dbReference>
<dbReference type="PANTHER" id="PTHR10642:SF26">
    <property type="entry name" value="RIBONUCLEASE H1"/>
    <property type="match status" value="1"/>
</dbReference>
<dbReference type="Pfam" id="PF00075">
    <property type="entry name" value="RNase_H"/>
    <property type="match status" value="1"/>
</dbReference>
<dbReference type="SUPFAM" id="SSF53098">
    <property type="entry name" value="Ribonuclease H-like"/>
    <property type="match status" value="1"/>
</dbReference>
<dbReference type="PROSITE" id="PS50879">
    <property type="entry name" value="RNASE_H_1"/>
    <property type="match status" value="1"/>
</dbReference>
<proteinExistence type="inferred from homology"/>